<protein>
    <recommendedName>
        <fullName evidence="1">Small ribosomal subunit protein uS9</fullName>
    </recommendedName>
    <alternativeName>
        <fullName evidence="2">30S ribosomal protein S9</fullName>
    </alternativeName>
</protein>
<comment type="similarity">
    <text evidence="1">Belongs to the universal ribosomal protein uS9 family.</text>
</comment>
<keyword id="KW-1185">Reference proteome</keyword>
<keyword id="KW-0687">Ribonucleoprotein</keyword>
<keyword id="KW-0689">Ribosomal protein</keyword>
<sequence length="130" mass="14519">MAITQNYGTGRRKSSTARVFLRKGTGKITVNDRPLDEFFGRETARMIVRQPLELTKNTESFDILVTASGGGTTGQAGAIRLGIARALVEYDETLKSELRKAGFMTRDAREVERKKVGLHKARRATQFSKR</sequence>
<feature type="chain" id="PRO_1000051367" description="Small ribosomal subunit protein uS9">
    <location>
        <begin position="1"/>
        <end position="130"/>
    </location>
</feature>
<evidence type="ECO:0000255" key="1">
    <source>
        <dbReference type="HAMAP-Rule" id="MF_00532"/>
    </source>
</evidence>
<evidence type="ECO:0000305" key="2"/>
<dbReference type="EMBL" id="AE013598">
    <property type="protein sequence ID" value="AAW77406.1"/>
    <property type="molecule type" value="Genomic_DNA"/>
</dbReference>
<dbReference type="SMR" id="Q5GV67"/>
<dbReference type="STRING" id="291331.XOO4152"/>
<dbReference type="KEGG" id="xoo:XOO4152"/>
<dbReference type="HOGENOM" id="CLU_046483_2_1_6"/>
<dbReference type="Proteomes" id="UP000006735">
    <property type="component" value="Chromosome"/>
</dbReference>
<dbReference type="GO" id="GO:0022627">
    <property type="term" value="C:cytosolic small ribosomal subunit"/>
    <property type="evidence" value="ECO:0007669"/>
    <property type="project" value="TreeGrafter"/>
</dbReference>
<dbReference type="GO" id="GO:0003723">
    <property type="term" value="F:RNA binding"/>
    <property type="evidence" value="ECO:0007669"/>
    <property type="project" value="TreeGrafter"/>
</dbReference>
<dbReference type="GO" id="GO:0003735">
    <property type="term" value="F:structural constituent of ribosome"/>
    <property type="evidence" value="ECO:0007669"/>
    <property type="project" value="InterPro"/>
</dbReference>
<dbReference type="GO" id="GO:0006412">
    <property type="term" value="P:translation"/>
    <property type="evidence" value="ECO:0007669"/>
    <property type="project" value="UniProtKB-UniRule"/>
</dbReference>
<dbReference type="FunFam" id="3.30.230.10:FF:000001">
    <property type="entry name" value="30S ribosomal protein S9"/>
    <property type="match status" value="1"/>
</dbReference>
<dbReference type="Gene3D" id="3.30.230.10">
    <property type="match status" value="1"/>
</dbReference>
<dbReference type="HAMAP" id="MF_00532_B">
    <property type="entry name" value="Ribosomal_uS9_B"/>
    <property type="match status" value="1"/>
</dbReference>
<dbReference type="InterPro" id="IPR020568">
    <property type="entry name" value="Ribosomal_Su5_D2-typ_SF"/>
</dbReference>
<dbReference type="InterPro" id="IPR000754">
    <property type="entry name" value="Ribosomal_uS9"/>
</dbReference>
<dbReference type="InterPro" id="IPR023035">
    <property type="entry name" value="Ribosomal_uS9_bac/plastid"/>
</dbReference>
<dbReference type="InterPro" id="IPR020574">
    <property type="entry name" value="Ribosomal_uS9_CS"/>
</dbReference>
<dbReference type="InterPro" id="IPR014721">
    <property type="entry name" value="Ribsml_uS5_D2-typ_fold_subgr"/>
</dbReference>
<dbReference type="NCBIfam" id="NF001099">
    <property type="entry name" value="PRK00132.1"/>
    <property type="match status" value="1"/>
</dbReference>
<dbReference type="PANTHER" id="PTHR21569">
    <property type="entry name" value="RIBOSOMAL PROTEIN S9"/>
    <property type="match status" value="1"/>
</dbReference>
<dbReference type="PANTHER" id="PTHR21569:SF1">
    <property type="entry name" value="SMALL RIBOSOMAL SUBUNIT PROTEIN US9M"/>
    <property type="match status" value="1"/>
</dbReference>
<dbReference type="Pfam" id="PF00380">
    <property type="entry name" value="Ribosomal_S9"/>
    <property type="match status" value="1"/>
</dbReference>
<dbReference type="SUPFAM" id="SSF54211">
    <property type="entry name" value="Ribosomal protein S5 domain 2-like"/>
    <property type="match status" value="1"/>
</dbReference>
<dbReference type="PROSITE" id="PS00360">
    <property type="entry name" value="RIBOSOMAL_S9"/>
    <property type="match status" value="1"/>
</dbReference>
<gene>
    <name evidence="1" type="primary">rpsI</name>
    <name type="ordered locus">XOO4152</name>
</gene>
<proteinExistence type="inferred from homology"/>
<accession>Q5GV67</accession>
<organism>
    <name type="scientific">Xanthomonas oryzae pv. oryzae (strain KACC10331 / KXO85)</name>
    <dbReference type="NCBI Taxonomy" id="291331"/>
    <lineage>
        <taxon>Bacteria</taxon>
        <taxon>Pseudomonadati</taxon>
        <taxon>Pseudomonadota</taxon>
        <taxon>Gammaproteobacteria</taxon>
        <taxon>Lysobacterales</taxon>
        <taxon>Lysobacteraceae</taxon>
        <taxon>Xanthomonas</taxon>
    </lineage>
</organism>
<name>RS9_XANOR</name>
<reference key="1">
    <citation type="journal article" date="2005" name="Nucleic Acids Res.">
        <title>The genome sequence of Xanthomonas oryzae pathovar oryzae KACC10331, the bacterial blight pathogen of rice.</title>
        <authorList>
            <person name="Lee B.-M."/>
            <person name="Park Y.-J."/>
            <person name="Park D.-S."/>
            <person name="Kang H.-W."/>
            <person name="Kim J.-G."/>
            <person name="Song E.-S."/>
            <person name="Park I.-C."/>
            <person name="Yoon U.-H."/>
            <person name="Hahn J.-H."/>
            <person name="Koo B.-S."/>
            <person name="Lee G.-B."/>
            <person name="Kim H."/>
            <person name="Park H.-S."/>
            <person name="Yoon K.-O."/>
            <person name="Kim J.-H."/>
            <person name="Jung C.-H."/>
            <person name="Koh N.-H."/>
            <person name="Seo J.-S."/>
            <person name="Go S.-J."/>
        </authorList>
    </citation>
    <scope>NUCLEOTIDE SEQUENCE [LARGE SCALE GENOMIC DNA]</scope>
    <source>
        <strain>KACC10331 / KXO85</strain>
    </source>
</reference>